<feature type="chain" id="PRO_0000177465" description="Large ribosomal subunit protein bL35c">
    <location>
        <begin position="1"/>
        <end position="64"/>
    </location>
</feature>
<sequence>MNIRKNSKSVSKRFKVTSNKLILYKPASKSHLQEKKTVSRKKRLCRVKRIKVVDSKSIKLRYMF</sequence>
<keyword id="KW-0150">Chloroplast</keyword>
<keyword id="KW-0934">Plastid</keyword>
<keyword id="KW-0687">Ribonucleoprotein</keyword>
<keyword id="KW-0689">Ribosomal protein</keyword>
<evidence type="ECO:0000255" key="1">
    <source>
        <dbReference type="HAMAP-Rule" id="MF_00514"/>
    </source>
</evidence>
<evidence type="ECO:0000305" key="2"/>
<reference key="1">
    <citation type="journal article" date="2000" name="J. Mol. Evol.">
        <title>The structure and gene repertoire of an ancient red algal plastid genome.</title>
        <authorList>
            <person name="Gloeckner G."/>
            <person name="Rosenthal A."/>
            <person name="Valentin K.-U."/>
        </authorList>
    </citation>
    <scope>NUCLEOTIDE SEQUENCE [LARGE SCALE GENOMIC DNA]</scope>
    <source>
        <strain>RK-1</strain>
    </source>
</reference>
<protein>
    <recommendedName>
        <fullName evidence="1">Large ribosomal subunit protein bL35c</fullName>
    </recommendedName>
    <alternativeName>
        <fullName evidence="2">50S ribosomal protein L35, chloroplastic</fullName>
    </alternativeName>
</protein>
<gene>
    <name evidence="1" type="primary">rpl35</name>
</gene>
<name>RK35_CYACA</name>
<accession>Q9TLR9</accession>
<organism>
    <name type="scientific">Cyanidium caldarium</name>
    <name type="common">Red alga</name>
    <dbReference type="NCBI Taxonomy" id="2771"/>
    <lineage>
        <taxon>Eukaryota</taxon>
        <taxon>Rhodophyta</taxon>
        <taxon>Bangiophyceae</taxon>
        <taxon>Cyanidiales</taxon>
        <taxon>Cyanidiaceae</taxon>
        <taxon>Cyanidium</taxon>
    </lineage>
</organism>
<comment type="subcellular location">
    <subcellularLocation>
        <location>Plastid</location>
        <location>Chloroplast</location>
    </subcellularLocation>
</comment>
<comment type="similarity">
    <text evidence="1">Belongs to the bacterial ribosomal protein bL35 family.</text>
</comment>
<dbReference type="EMBL" id="AF022186">
    <property type="protein sequence ID" value="AAF12894.1"/>
    <property type="molecule type" value="Genomic_DNA"/>
</dbReference>
<dbReference type="RefSeq" id="NP_045200.1">
    <property type="nucleotide sequence ID" value="NC_001840.1"/>
</dbReference>
<dbReference type="SMR" id="Q9TLR9"/>
<dbReference type="GeneID" id="800198"/>
<dbReference type="GO" id="GO:0009507">
    <property type="term" value="C:chloroplast"/>
    <property type="evidence" value="ECO:0007669"/>
    <property type="project" value="UniProtKB-SubCell"/>
</dbReference>
<dbReference type="GO" id="GO:1990904">
    <property type="term" value="C:ribonucleoprotein complex"/>
    <property type="evidence" value="ECO:0007669"/>
    <property type="project" value="UniProtKB-KW"/>
</dbReference>
<dbReference type="GO" id="GO:0005840">
    <property type="term" value="C:ribosome"/>
    <property type="evidence" value="ECO:0007669"/>
    <property type="project" value="UniProtKB-KW"/>
</dbReference>
<dbReference type="GO" id="GO:0003735">
    <property type="term" value="F:structural constituent of ribosome"/>
    <property type="evidence" value="ECO:0007669"/>
    <property type="project" value="InterPro"/>
</dbReference>
<dbReference type="GO" id="GO:0006412">
    <property type="term" value="P:translation"/>
    <property type="evidence" value="ECO:0007669"/>
    <property type="project" value="UniProtKB-UniRule"/>
</dbReference>
<dbReference type="Gene3D" id="4.10.410.60">
    <property type="match status" value="1"/>
</dbReference>
<dbReference type="HAMAP" id="MF_00514">
    <property type="entry name" value="Ribosomal_bL35"/>
    <property type="match status" value="1"/>
</dbReference>
<dbReference type="InterPro" id="IPR001706">
    <property type="entry name" value="Ribosomal_bL35"/>
</dbReference>
<dbReference type="InterPro" id="IPR021137">
    <property type="entry name" value="Ribosomal_bL35-like"/>
</dbReference>
<dbReference type="InterPro" id="IPR018265">
    <property type="entry name" value="Ribosomal_bL35_CS"/>
</dbReference>
<dbReference type="InterPro" id="IPR037229">
    <property type="entry name" value="Ribosomal_bL35_sf"/>
</dbReference>
<dbReference type="Pfam" id="PF01632">
    <property type="entry name" value="Ribosomal_L35p"/>
    <property type="match status" value="1"/>
</dbReference>
<dbReference type="PRINTS" id="PR00064">
    <property type="entry name" value="RIBOSOMALL35"/>
</dbReference>
<dbReference type="SUPFAM" id="SSF143034">
    <property type="entry name" value="L35p-like"/>
    <property type="match status" value="1"/>
</dbReference>
<dbReference type="PROSITE" id="PS00936">
    <property type="entry name" value="RIBOSOMAL_L35"/>
    <property type="match status" value="1"/>
</dbReference>
<geneLocation type="chloroplast"/>
<proteinExistence type="inferred from homology"/>